<evidence type="ECO:0000250" key="1">
    <source>
        <dbReference type="UniProtKB" id="Q5SUV2"/>
    </source>
</evidence>
<evidence type="ECO:0000250" key="2">
    <source>
        <dbReference type="UniProtKB" id="Q8TBZ2"/>
    </source>
</evidence>
<evidence type="ECO:0000256" key="3">
    <source>
        <dbReference type="SAM" id="MobiDB-lite"/>
    </source>
</evidence>
<evidence type="ECO:0000269" key="4">
    <source>
    </source>
</evidence>
<evidence type="ECO:0000303" key="5">
    <source>
    </source>
</evidence>
<evidence type="ECO:0000305" key="6"/>
<evidence type="ECO:0000312" key="7">
    <source>
        <dbReference type="EMBL" id="AAR10437.1"/>
    </source>
</evidence>
<evidence type="ECO:0000312" key="8">
    <source>
        <dbReference type="RGD" id="1359123"/>
    </source>
</evidence>
<evidence type="ECO:0007744" key="9">
    <source>
    </source>
</evidence>
<organism>
    <name type="scientific">Rattus norvegicus</name>
    <name type="common">Rat</name>
    <dbReference type="NCBI Taxonomy" id="10116"/>
    <lineage>
        <taxon>Eukaryota</taxon>
        <taxon>Metazoa</taxon>
        <taxon>Chordata</taxon>
        <taxon>Craniata</taxon>
        <taxon>Vertebrata</taxon>
        <taxon>Euteleostomi</taxon>
        <taxon>Mammalia</taxon>
        <taxon>Eutheria</taxon>
        <taxon>Euarchontoglires</taxon>
        <taxon>Glires</taxon>
        <taxon>Rodentia</taxon>
        <taxon>Myomorpha</taxon>
        <taxon>Muroidea</taxon>
        <taxon>Muridae</taxon>
        <taxon>Murinae</taxon>
        <taxon>Rattus</taxon>
    </lineage>
</organism>
<name>MYBPP_RAT</name>
<dbReference type="EMBL" id="AY353958">
    <property type="protein sequence ID" value="AAR10437.1"/>
    <property type="molecule type" value="mRNA"/>
</dbReference>
<dbReference type="EMBL" id="AY353959">
    <property type="protein sequence ID" value="AAR10438.1"/>
    <property type="molecule type" value="mRNA"/>
</dbReference>
<dbReference type="RefSeq" id="NP_001009482.1">
    <property type="nucleotide sequence ID" value="NM_001009482.1"/>
</dbReference>
<dbReference type="FunCoup" id="Q69CM7">
    <property type="interactions" value="318"/>
</dbReference>
<dbReference type="STRING" id="10116.ENSRNOP00000071847"/>
<dbReference type="GlyGen" id="Q69CM7">
    <property type="glycosylation" value="1 site"/>
</dbReference>
<dbReference type="iPTMnet" id="Q69CM7"/>
<dbReference type="PhosphoSitePlus" id="Q69CM7"/>
<dbReference type="PaxDb" id="10116-ENSRNOP00000067004"/>
<dbReference type="GeneID" id="494192"/>
<dbReference type="KEGG" id="rno:494192"/>
<dbReference type="AGR" id="RGD:1359123"/>
<dbReference type="CTD" id="84073"/>
<dbReference type="RGD" id="1359123">
    <property type="gene designation" value="Mycbpap"/>
</dbReference>
<dbReference type="eggNOG" id="ENOG502QT8X">
    <property type="taxonomic scope" value="Eukaryota"/>
</dbReference>
<dbReference type="InParanoid" id="Q69CM7"/>
<dbReference type="PhylomeDB" id="Q69CM7"/>
<dbReference type="PRO" id="PR:Q69CM7"/>
<dbReference type="Proteomes" id="UP000002494">
    <property type="component" value="Unplaced"/>
</dbReference>
<dbReference type="GO" id="GO:0030125">
    <property type="term" value="C:clathrin vesicle coat"/>
    <property type="evidence" value="ECO:0000318"/>
    <property type="project" value="GO_Central"/>
</dbReference>
<dbReference type="GO" id="GO:0005737">
    <property type="term" value="C:cytoplasm"/>
    <property type="evidence" value="ECO:0000250"/>
    <property type="project" value="UniProtKB"/>
</dbReference>
<dbReference type="GO" id="GO:0005768">
    <property type="term" value="C:endosome"/>
    <property type="evidence" value="ECO:0000318"/>
    <property type="project" value="GO_Central"/>
</dbReference>
<dbReference type="GO" id="GO:0019897">
    <property type="term" value="C:extrinsic component of plasma membrane"/>
    <property type="evidence" value="ECO:0000304"/>
    <property type="project" value="RGD"/>
</dbReference>
<dbReference type="GO" id="GO:0005886">
    <property type="term" value="C:plasma membrane"/>
    <property type="evidence" value="ECO:0000318"/>
    <property type="project" value="GO_Central"/>
</dbReference>
<dbReference type="GO" id="GO:0030276">
    <property type="term" value="F:clathrin binding"/>
    <property type="evidence" value="ECO:0000318"/>
    <property type="project" value="GO_Central"/>
</dbReference>
<dbReference type="GO" id="GO:0005543">
    <property type="term" value="F:phospholipid binding"/>
    <property type="evidence" value="ECO:0000318"/>
    <property type="project" value="GO_Central"/>
</dbReference>
<dbReference type="GO" id="GO:0030154">
    <property type="term" value="P:cell differentiation"/>
    <property type="evidence" value="ECO:0007669"/>
    <property type="project" value="UniProtKB-KW"/>
</dbReference>
<dbReference type="GO" id="GO:0007268">
    <property type="term" value="P:chemical synaptic transmission"/>
    <property type="evidence" value="ECO:0000270"/>
    <property type="project" value="UniProtKB"/>
</dbReference>
<dbReference type="GO" id="GO:0006897">
    <property type="term" value="P:endocytosis"/>
    <property type="evidence" value="ECO:0000318"/>
    <property type="project" value="GO_Central"/>
</dbReference>
<dbReference type="GO" id="GO:0007283">
    <property type="term" value="P:spermatogenesis"/>
    <property type="evidence" value="ECO:0000250"/>
    <property type="project" value="UniProtKB"/>
</dbReference>
<dbReference type="Gene3D" id="2.60.40.10">
    <property type="entry name" value="Immunoglobulins"/>
    <property type="match status" value="1"/>
</dbReference>
<dbReference type="InterPro" id="IPR013783">
    <property type="entry name" value="Ig-like_fold"/>
</dbReference>
<dbReference type="InterPro" id="IPR032707">
    <property type="entry name" value="MYCBPAP"/>
</dbReference>
<dbReference type="PANTHER" id="PTHR48421">
    <property type="entry name" value="MYCBP-ASSOCIATED PROTEIN"/>
    <property type="match status" value="1"/>
</dbReference>
<dbReference type="PANTHER" id="PTHR48421:SF1">
    <property type="entry name" value="MYCBP-ASSOCIATED PROTEIN"/>
    <property type="match status" value="1"/>
</dbReference>
<dbReference type="Pfam" id="PF14646">
    <property type="entry name" value="MYCBPAP"/>
    <property type="match status" value="1"/>
</dbReference>
<accession>Q69CM7</accession>
<accession>Q69CM6</accession>
<gene>
    <name evidence="8" type="primary">Mycbpap</name>
    <name type="synonym">Cod106</name>
</gene>
<reference evidence="6 7" key="1">
    <citation type="journal article" date="2005" name="Mol. Cell. Neurosci.">
        <title>Cod106, a novel synaptic protein expressed in sensory hair cells of the inner ear and in CNS neurons.</title>
        <authorList>
            <person name="Reisinger E."/>
            <person name="Zimmermann U."/>
            <person name="Knipper M."/>
            <person name="Ludwig J."/>
            <person name="Kloecker N."/>
            <person name="Fakler B."/>
            <person name="Oliver D."/>
        </authorList>
    </citation>
    <scope>NUCLEOTIDE SEQUENCE [MRNA] (ISOFORMS 1 AND 2)</scope>
    <scope>FUNCTION</scope>
    <scope>SUBCELLULAR LOCATION</scope>
    <scope>TISSUE SPECIFICITY</scope>
    <scope>DEVELOPMENTAL STAGE</scope>
    <source>
        <strain evidence="7">Wistar</strain>
        <tissue evidence="7">Cochlea</tissue>
    </source>
</reference>
<reference key="2">
    <citation type="journal article" date="2012" name="Nat. Commun.">
        <title>Quantitative maps of protein phosphorylation sites across 14 different rat organs and tissues.</title>
        <authorList>
            <person name="Lundby A."/>
            <person name="Secher A."/>
            <person name="Lage K."/>
            <person name="Nordsborg N.B."/>
            <person name="Dmytriyev A."/>
            <person name="Lundby C."/>
            <person name="Olsen J.V."/>
        </authorList>
    </citation>
    <scope>PHOSPHORYLATION [LARGE SCALE ANALYSIS] AT THR-558 AND SER-564</scope>
    <scope>IDENTIFICATION BY MASS SPECTROMETRY [LARGE SCALE ANALYSIS]</scope>
</reference>
<keyword id="KW-0025">Alternative splicing</keyword>
<keyword id="KW-0963">Cytoplasm</keyword>
<keyword id="KW-0217">Developmental protein</keyword>
<keyword id="KW-0221">Differentiation</keyword>
<keyword id="KW-0472">Membrane</keyword>
<keyword id="KW-0597">Phosphoprotein</keyword>
<keyword id="KW-1185">Reference proteome</keyword>
<keyword id="KW-0744">Spermatogenesis</keyword>
<protein>
    <recommendedName>
        <fullName>MYCBP-associated protein</fullName>
    </recommendedName>
    <alternativeName>
        <fullName>Organ of Corti membrane-associated protein of 106 kDa</fullName>
    </alternativeName>
</protein>
<proteinExistence type="evidence at protein level"/>
<comment type="function">
    <text evidence="2 4">May play a role in spermatogenesis (By similarity). May be involved in synaptic processes.</text>
</comment>
<comment type="subunit">
    <text evidence="2">Interacts with MYCBP.</text>
</comment>
<comment type="subcellular location">
    <subcellularLocation>
        <location evidence="4">Cytoplasm</location>
    </subcellularLocation>
    <subcellularLocation>
        <location evidence="4">Membrane</location>
    </subcellularLocation>
    <text evidence="2 4">Colocalizes with MYCBP in the cytoplasm.</text>
</comment>
<comment type="alternative products">
    <event type="alternative splicing"/>
    <isoform>
        <id>Q69CM7-1</id>
        <name evidence="4">1</name>
        <name evidence="4">Cod106a</name>
        <sequence type="displayed"/>
    </isoform>
    <isoform>
        <id>Q69CM7-2</id>
        <name evidence="4">2</name>
        <name evidence="4">Cod106b</name>
        <sequence type="described" ref="VSP_052546"/>
    </isoform>
</comment>
<comment type="tissue specificity">
    <text evidence="4">Expressed in brain, retina, testis, heart and lung. Not detected in liver, kidney or intestine. In brain, highly abundant in CNS neurons of the hippocampus and cerebellum. Strongly expressed in cochlea and vestibular sensory epithelia. In both the organ of Corti and the vestibular organ, expression is restricted to hair cells.</text>
</comment>
<comment type="developmental stage">
    <text evidence="4">After birth, expression in the organ of Corti increases about 10-fold by postnatal day 5 (P5) and remains at constant levels thereafter.</text>
</comment>
<sequence>MKKANDRQSPPKLLEKKRAKAPEQPTPPIQEEPEPVSNVLQGDDILALAIKKEDLTKQHIPQFEETGEKPVVTQKFIIRKLKPKDSCKRVYHLVAHPANPDATTKPLDYSGPRDSFLSSDQILPHQILGSLQDFKRIAVARGNTQLAKLINIQPCLMTLISAKEEPKPKSPKEEKRPPWAPPLQHNFLKNWRRHITLRKKQQEVLSEHLKKPASELLMNSGEGYRKIQEEREAIDRALPTQHDRKAMNCFWSPLEYLGDEKSGLLMTKKKKQRGLVEPITHIRKPFSIQMETGLPVQKDAWYRYTWDRSLFLIYRRKGLQNIMAELDFSQQDIDGLEVVGHGKPFSSVTVEEPLPLEKSQKSSSEDTVFLDSLTNLSDMVPMPILGPSLLFCGKPACWIRGSNPEDKKNIGIGVRLTFETLEGEKTSSELTVVNNGTVAIWYDWRRRPQQDFFQDLKQNRTQRFYFNNREGVILPGETKHFTFFFKSRNAGIFMESWEFGTHPTLLGGAALQITLHAISLTQDIFMDERKLLESKLAAHEAVTIAQSVLQDLLRGVSTPERAPSPVDAYLTEEDLFHYRNPRLHYQHRVVQNLHQLWQQYTEAKASQEEALNLRTPTVPLLFVEKPPDHSRTLASEYPQLQPHQEMDTLKDPKNSLLPQKTGISTKSMQRKSIMEEILVEEGPDRENTRSPRVLENLPPPKWNLCLEDFRQAVMTFPEELQREDALIQLNKAAMELCQEQKPLQSDLLYQMCLQLWRDVIDSLVSQSLWLRSLLGLPEKETVYLDIPDEGQKSPPVTEVKVTSGKLGKEDRRGGAQEKKQLSARDKEEKKGSKTPSKEDRLNSKKQKAKDDKKVVKSTSRDRLLSEDPPADSSATSQEPIDPLVMEKYTQRLYSEVYGLLDNLVIDMMVLADELGSEKNVEEPLRFCT</sequence>
<feature type="chain" id="PRO_0000302879" description="MYCBP-associated protein">
    <location>
        <begin position="1"/>
        <end position="928"/>
    </location>
</feature>
<feature type="region of interest" description="Disordered" evidence="3">
    <location>
        <begin position="1"/>
        <end position="38"/>
    </location>
</feature>
<feature type="region of interest" description="Disordered" evidence="3">
    <location>
        <begin position="164"/>
        <end position="183"/>
    </location>
</feature>
<feature type="region of interest" description="Disordered" evidence="3">
    <location>
        <begin position="786"/>
        <end position="881"/>
    </location>
</feature>
<feature type="compositionally biased region" description="Basic and acidic residues" evidence="3">
    <location>
        <begin position="164"/>
        <end position="177"/>
    </location>
</feature>
<feature type="compositionally biased region" description="Basic and acidic residues" evidence="3">
    <location>
        <begin position="806"/>
        <end position="865"/>
    </location>
</feature>
<feature type="modified residue" description="Phosphoserine" evidence="1">
    <location>
        <position position="557"/>
    </location>
</feature>
<feature type="modified residue" description="Phosphothreonine" evidence="9">
    <location>
        <position position="558"/>
    </location>
</feature>
<feature type="modified residue" description="Phosphoserine" evidence="9">
    <location>
        <position position="564"/>
    </location>
</feature>
<feature type="splice variant" id="VSP_052546" description="In isoform 2." evidence="5">
    <original>MKKANDRQSPPKLL</original>
    <variation>MTPWRSLAPHVTSRGRR</variation>
    <location>
        <begin position="1"/>
        <end position="14"/>
    </location>
</feature>